<comment type="function">
    <text evidence="1 3 4">Required for the formation of a threonylcarbamoyl group on adenosine at position 37 (t(6)A37) in mitochondrial tRNAs that read codons beginning with adenine. Probably involved in the transfer of the threonylcarbamoyl moiety of threonylcarbamoyl-AMP (TC-AMP) to the N6 group of A37. Involved in mitochondrial genome maintenance.</text>
</comment>
<comment type="catalytic activity">
    <reaction evidence="1 8 9">
        <text>L-threonylcarbamoyladenylate + adenosine(37) in tRNA = N(6)-L-threonylcarbamoyladenosine(37) in tRNA + AMP + H(+)</text>
        <dbReference type="Rhea" id="RHEA:37059"/>
        <dbReference type="Rhea" id="RHEA-COMP:10162"/>
        <dbReference type="Rhea" id="RHEA-COMP:10163"/>
        <dbReference type="ChEBI" id="CHEBI:15378"/>
        <dbReference type="ChEBI" id="CHEBI:73682"/>
        <dbReference type="ChEBI" id="CHEBI:74411"/>
        <dbReference type="ChEBI" id="CHEBI:74418"/>
        <dbReference type="ChEBI" id="CHEBI:456215"/>
        <dbReference type="EC" id="2.3.1.234"/>
    </reaction>
</comment>
<comment type="cofactor">
    <cofactor evidence="1">
        <name>a divalent metal cation</name>
        <dbReference type="ChEBI" id="CHEBI:60240"/>
    </cofactor>
    <text evidence="1">Binds 1 divalent metal cation per subunit.</text>
</comment>
<comment type="subunit">
    <text evidence="1 4">Monomer.</text>
</comment>
<comment type="subcellular location">
    <subcellularLocation>
        <location evidence="1 2 3">Mitochondrion</location>
    </subcellularLocation>
</comment>
<comment type="alternative products">
    <event type="alternative splicing"/>
    <isoform>
        <id>Q9H4B0-1</id>
        <name>1</name>
        <sequence type="displayed"/>
    </isoform>
    <isoform>
        <id>Q9H4B0-2</id>
        <name>2</name>
        <sequence type="described" ref="VSP_028830"/>
    </isoform>
    <isoform>
        <id>Q9H4B0-3</id>
        <name>3</name>
        <sequence type="described" ref="VSP_028828 VSP_028829"/>
    </isoform>
</comment>
<comment type="tissue specificity">
    <text evidence="2">Widely expressed, with maximum expression in pituitary gland, prostate, rectum and uterus.</text>
</comment>
<comment type="similarity">
    <text evidence="1">Belongs to the KAE1 / TsaD family.</text>
</comment>
<dbReference type="EC" id="2.3.1.234" evidence="1 8 9"/>
<dbReference type="EMBL" id="AJ295148">
    <property type="protein sequence ID" value="CAC14666.1"/>
    <property type="status" value="ALT_TERM"/>
    <property type="molecule type" value="mRNA"/>
</dbReference>
<dbReference type="EMBL" id="AK055441">
    <property type="protein sequence ID" value="BAB70923.1"/>
    <property type="molecule type" value="mRNA"/>
</dbReference>
<dbReference type="EMBL" id="AC013468">
    <property type="protein sequence ID" value="AAY14771.1"/>
    <property type="molecule type" value="Genomic_DNA"/>
</dbReference>
<dbReference type="EMBL" id="BC011904">
    <property type="protein sequence ID" value="AAH11904.1"/>
    <property type="molecule type" value="mRNA"/>
</dbReference>
<dbReference type="CCDS" id="CCDS46472.1">
    <molecule id="Q9H4B0-1"/>
</dbReference>
<dbReference type="RefSeq" id="NP_001341276.2">
    <molecule id="Q9H4B0-1"/>
    <property type="nucleotide sequence ID" value="NM_001354347.2"/>
</dbReference>
<dbReference type="RefSeq" id="NP_001363006.1">
    <molecule id="Q9H4B0-1"/>
    <property type="nucleotide sequence ID" value="NM_001376077.1"/>
</dbReference>
<dbReference type="RefSeq" id="NP_001363007.1">
    <molecule id="Q9H4B0-1"/>
    <property type="nucleotide sequence ID" value="NM_001376078.1"/>
</dbReference>
<dbReference type="RefSeq" id="NP_001363008.1">
    <molecule id="Q9H4B0-1"/>
    <property type="nucleotide sequence ID" value="NM_001376079.1"/>
</dbReference>
<dbReference type="RefSeq" id="NP_001363009.1">
    <molecule id="Q9H4B0-1"/>
    <property type="nucleotide sequence ID" value="NM_001376080.1"/>
</dbReference>
<dbReference type="RefSeq" id="NP_001363010.1">
    <molecule id="Q9H4B0-1"/>
    <property type="nucleotide sequence ID" value="NM_001376081.1"/>
</dbReference>
<dbReference type="RefSeq" id="NP_001363011.1">
    <molecule id="Q9H4B0-1"/>
    <property type="nucleotide sequence ID" value="NM_001376082.1"/>
</dbReference>
<dbReference type="RefSeq" id="NP_001363012.1">
    <molecule id="Q9H4B0-1"/>
    <property type="nucleotide sequence ID" value="NM_001376083.1"/>
</dbReference>
<dbReference type="RefSeq" id="NP_001363029.1">
    <molecule id="Q9H4B0-2"/>
    <property type="nucleotide sequence ID" value="NM_001376100.1"/>
</dbReference>
<dbReference type="RefSeq" id="NP_071748.2">
    <molecule id="Q9H4B0-1"/>
    <property type="nucleotide sequence ID" value="NM_022353.3"/>
</dbReference>
<dbReference type="RefSeq" id="XP_005246823.1">
    <property type="nucleotide sequence ID" value="XM_005246766.3"/>
</dbReference>
<dbReference type="RefSeq" id="XP_006712748.1">
    <property type="nucleotide sequence ID" value="XM_006712685.1"/>
</dbReference>
<dbReference type="RefSeq" id="XP_011509933.1">
    <property type="nucleotide sequence ID" value="XM_011511631.1"/>
</dbReference>
<dbReference type="RefSeq" id="XP_016860165.1">
    <molecule id="Q9H4B0-1"/>
    <property type="nucleotide sequence ID" value="XM_017004676.2"/>
</dbReference>
<dbReference type="RefSeq" id="XP_016860166.1">
    <property type="nucleotide sequence ID" value="XM_017004677.1"/>
</dbReference>
<dbReference type="RefSeq" id="XP_016860167.1">
    <property type="nucleotide sequence ID" value="XM_017004678.1"/>
</dbReference>
<dbReference type="RefSeq" id="XP_016860168.1">
    <property type="nucleotide sequence ID" value="XM_017004679.1"/>
</dbReference>
<dbReference type="RefSeq" id="XP_016860169.1">
    <property type="nucleotide sequence ID" value="XM_017004680.1"/>
</dbReference>
<dbReference type="RefSeq" id="XP_054199317.1">
    <molecule id="Q9H4B0-1"/>
    <property type="nucleotide sequence ID" value="XM_054343342.1"/>
</dbReference>
<dbReference type="SMR" id="Q9H4B0"/>
<dbReference type="BioGRID" id="122095">
    <property type="interactions" value="9"/>
</dbReference>
<dbReference type="FunCoup" id="Q9H4B0">
    <property type="interactions" value="1877"/>
</dbReference>
<dbReference type="IntAct" id="Q9H4B0">
    <property type="interactions" value="4"/>
</dbReference>
<dbReference type="STRING" id="9606.ENSP00000264151"/>
<dbReference type="GlyGen" id="Q9H4B0">
    <property type="glycosylation" value="1 site, 1 O-linked glycan (1 site)"/>
</dbReference>
<dbReference type="iPTMnet" id="Q9H4B0"/>
<dbReference type="PhosphoSitePlus" id="Q9H4B0"/>
<dbReference type="SwissPalm" id="Q9H4B0"/>
<dbReference type="BioMuta" id="OSGEPL1"/>
<dbReference type="DMDM" id="160013222"/>
<dbReference type="jPOST" id="Q9H4B0"/>
<dbReference type="MassIVE" id="Q9H4B0"/>
<dbReference type="PaxDb" id="9606-ENSP00000264151"/>
<dbReference type="PeptideAtlas" id="Q9H4B0"/>
<dbReference type="ProteomicsDB" id="80814">
    <molecule id="Q9H4B0-1"/>
</dbReference>
<dbReference type="ProteomicsDB" id="80815">
    <molecule id="Q9H4B0-2"/>
</dbReference>
<dbReference type="ProteomicsDB" id="80816">
    <molecule id="Q9H4B0-3"/>
</dbReference>
<dbReference type="Pumba" id="Q9H4B0"/>
<dbReference type="Antibodypedia" id="34028">
    <property type="antibodies" value="75 antibodies from 21 providers"/>
</dbReference>
<dbReference type="DNASU" id="64172"/>
<dbReference type="Ensembl" id="ENST00000264151.10">
    <molecule id="Q9H4B0-1"/>
    <property type="protein sequence ID" value="ENSP00000264151.5"/>
    <property type="gene ID" value="ENSG00000128694.12"/>
</dbReference>
<dbReference type="Ensembl" id="ENST00000519810.5">
    <molecule id="Q9H4B0-2"/>
    <property type="protein sequence ID" value="ENSP00000428859.1"/>
    <property type="gene ID" value="ENSG00000128694.12"/>
</dbReference>
<dbReference type="Ensembl" id="ENST00000522700.5">
    <molecule id="Q9H4B0-1"/>
    <property type="protein sequence ID" value="ENSP00000429697.1"/>
    <property type="gene ID" value="ENSG00000128694.12"/>
</dbReference>
<dbReference type="GeneID" id="64172"/>
<dbReference type="KEGG" id="hsa:64172"/>
<dbReference type="MANE-Select" id="ENST00000264151.10">
    <property type="protein sequence ID" value="ENSP00000264151.5"/>
    <property type="RefSeq nucleotide sequence ID" value="NM_022353.3"/>
    <property type="RefSeq protein sequence ID" value="NP_071748.2"/>
</dbReference>
<dbReference type="UCSC" id="uc002uqz.2">
    <molecule id="Q9H4B0-1"/>
    <property type="organism name" value="human"/>
</dbReference>
<dbReference type="AGR" id="HGNC:23075"/>
<dbReference type="CTD" id="64172"/>
<dbReference type="DisGeNET" id="64172"/>
<dbReference type="GeneCards" id="OSGEPL1"/>
<dbReference type="HGNC" id="HGNC:23075">
    <property type="gene designation" value="OSGEPL1"/>
</dbReference>
<dbReference type="HPA" id="ENSG00000128694">
    <property type="expression patterns" value="Low tissue specificity"/>
</dbReference>
<dbReference type="MIM" id="619634">
    <property type="type" value="gene"/>
</dbReference>
<dbReference type="neXtProt" id="NX_Q9H4B0"/>
<dbReference type="OpenTargets" id="ENSG00000128694"/>
<dbReference type="PharmGKB" id="PA134959704"/>
<dbReference type="VEuPathDB" id="HostDB:ENSG00000128694"/>
<dbReference type="eggNOG" id="KOG2707">
    <property type="taxonomic scope" value="Eukaryota"/>
</dbReference>
<dbReference type="GeneTree" id="ENSGT00940000153744"/>
<dbReference type="HOGENOM" id="CLU_023208_1_2_1"/>
<dbReference type="InParanoid" id="Q9H4B0"/>
<dbReference type="OMA" id="NAAMIGC"/>
<dbReference type="OrthoDB" id="10259622at2759"/>
<dbReference type="PAN-GO" id="Q9H4B0">
    <property type="GO annotations" value="1 GO annotation based on evolutionary models"/>
</dbReference>
<dbReference type="PhylomeDB" id="Q9H4B0"/>
<dbReference type="TreeFam" id="TF314600"/>
<dbReference type="PathwayCommons" id="Q9H4B0"/>
<dbReference type="SignaLink" id="Q9H4B0"/>
<dbReference type="BioGRID-ORCS" id="64172">
    <property type="hits" value="9 hits in 1156 CRISPR screens"/>
</dbReference>
<dbReference type="ChiTaRS" id="OSGEPL1">
    <property type="organism name" value="human"/>
</dbReference>
<dbReference type="GenomeRNAi" id="64172"/>
<dbReference type="Pharos" id="Q9H4B0">
    <property type="development level" value="Tbio"/>
</dbReference>
<dbReference type="PRO" id="PR:Q9H4B0"/>
<dbReference type="Proteomes" id="UP000005640">
    <property type="component" value="Chromosome 2"/>
</dbReference>
<dbReference type="RNAct" id="Q9H4B0">
    <property type="molecule type" value="protein"/>
</dbReference>
<dbReference type="Bgee" id="ENSG00000128694">
    <property type="expression patterns" value="Expressed in biceps brachii and 184 other cell types or tissues"/>
</dbReference>
<dbReference type="ExpressionAtlas" id="Q9H4B0">
    <property type="expression patterns" value="baseline and differential"/>
</dbReference>
<dbReference type="GO" id="GO:0005739">
    <property type="term" value="C:mitochondrion"/>
    <property type="evidence" value="ECO:0000314"/>
    <property type="project" value="HPA"/>
</dbReference>
<dbReference type="GO" id="GO:0046872">
    <property type="term" value="F:metal ion binding"/>
    <property type="evidence" value="ECO:0007669"/>
    <property type="project" value="UniProtKB-KW"/>
</dbReference>
<dbReference type="GO" id="GO:0061711">
    <property type="term" value="F:N(6)-L-threonylcarbamoyladenine synthase activity"/>
    <property type="evidence" value="ECO:0000314"/>
    <property type="project" value="UniProtKB"/>
</dbReference>
<dbReference type="GO" id="GO:0002949">
    <property type="term" value="P:tRNA threonylcarbamoyladenosine modification"/>
    <property type="evidence" value="ECO:0000314"/>
    <property type="project" value="UniProtKB"/>
</dbReference>
<dbReference type="CDD" id="cd24134">
    <property type="entry name" value="ASKHA_NBD_OSGEPL1_QRI7_euk"/>
    <property type="match status" value="1"/>
</dbReference>
<dbReference type="FunFam" id="3.30.420.40:FF:000106">
    <property type="entry name" value="Probable tRNA N6-adenosine threonylcarbamoyltransferase, mitochondrial"/>
    <property type="match status" value="1"/>
</dbReference>
<dbReference type="Gene3D" id="3.30.420.40">
    <property type="match status" value="2"/>
</dbReference>
<dbReference type="HAMAP" id="MF_01445">
    <property type="entry name" value="TsaD"/>
    <property type="match status" value="1"/>
</dbReference>
<dbReference type="InterPro" id="IPR043129">
    <property type="entry name" value="ATPase_NBD"/>
</dbReference>
<dbReference type="InterPro" id="IPR000905">
    <property type="entry name" value="Gcp-like_dom"/>
</dbReference>
<dbReference type="InterPro" id="IPR017861">
    <property type="entry name" value="KAE1/TsaD"/>
</dbReference>
<dbReference type="InterPro" id="IPR022450">
    <property type="entry name" value="TsaD"/>
</dbReference>
<dbReference type="NCBIfam" id="TIGR00329">
    <property type="entry name" value="gcp_kae1"/>
    <property type="match status" value="1"/>
</dbReference>
<dbReference type="PANTHER" id="PTHR11735">
    <property type="entry name" value="TRNA N6-ADENOSINE THREONYLCARBAMOYLTRANSFERASE"/>
    <property type="match status" value="1"/>
</dbReference>
<dbReference type="PANTHER" id="PTHR11735:SF6">
    <property type="entry name" value="TRNA N6-ADENOSINE THREONYLCARBAMOYLTRANSFERASE, MITOCHONDRIAL"/>
    <property type="match status" value="1"/>
</dbReference>
<dbReference type="Pfam" id="PF00814">
    <property type="entry name" value="TsaD"/>
    <property type="match status" value="1"/>
</dbReference>
<dbReference type="PRINTS" id="PR00789">
    <property type="entry name" value="OSIALOPTASE"/>
</dbReference>
<dbReference type="SUPFAM" id="SSF53067">
    <property type="entry name" value="Actin-like ATPase domain"/>
    <property type="match status" value="1"/>
</dbReference>
<organism>
    <name type="scientific">Homo sapiens</name>
    <name type="common">Human</name>
    <dbReference type="NCBI Taxonomy" id="9606"/>
    <lineage>
        <taxon>Eukaryota</taxon>
        <taxon>Metazoa</taxon>
        <taxon>Chordata</taxon>
        <taxon>Craniata</taxon>
        <taxon>Vertebrata</taxon>
        <taxon>Euteleostomi</taxon>
        <taxon>Mammalia</taxon>
        <taxon>Eutheria</taxon>
        <taxon>Euarchontoglires</taxon>
        <taxon>Primates</taxon>
        <taxon>Haplorrhini</taxon>
        <taxon>Catarrhini</taxon>
        <taxon>Hominidae</taxon>
        <taxon>Homo</taxon>
    </lineage>
</organism>
<feature type="transit peptide" description="Mitochondrion" evidence="1">
    <location>
        <begin position="1"/>
        <end position="29"/>
    </location>
</feature>
<feature type="chain" id="PRO_0000307778" description="tRNA N6-adenosine threonylcarbamoyltransferase, mitochondrial">
    <location>
        <begin position="30"/>
        <end position="414"/>
    </location>
</feature>
<feature type="binding site" evidence="1">
    <location>
        <position position="147"/>
    </location>
    <ligand>
        <name>a divalent metal cation</name>
        <dbReference type="ChEBI" id="CHEBI:60240"/>
    </ligand>
</feature>
<feature type="binding site" evidence="1">
    <location>
        <position position="151"/>
    </location>
    <ligand>
        <name>a divalent metal cation</name>
        <dbReference type="ChEBI" id="CHEBI:60240"/>
    </ligand>
</feature>
<feature type="binding site" evidence="1">
    <location>
        <begin position="169"/>
        <end position="173"/>
    </location>
    <ligand>
        <name>substrate</name>
    </ligand>
</feature>
<feature type="binding site" evidence="1">
    <location>
        <position position="202"/>
    </location>
    <ligand>
        <name>substrate</name>
    </ligand>
</feature>
<feature type="binding site" evidence="1">
    <location>
        <position position="222"/>
    </location>
    <ligand>
        <name>substrate</name>
    </ligand>
</feature>
<feature type="binding site" evidence="1">
    <location>
        <position position="226"/>
    </location>
    <ligand>
        <name>substrate</name>
    </ligand>
</feature>
<feature type="binding site" evidence="1">
    <location>
        <begin position="329"/>
        <end position="330"/>
    </location>
    <ligand>
        <name>substrate</name>
    </ligand>
</feature>
<feature type="binding site" evidence="1">
    <location>
        <position position="357"/>
    </location>
    <ligand>
        <name>substrate</name>
    </ligand>
</feature>
<feature type="binding site" evidence="1">
    <location>
        <position position="358"/>
    </location>
    <ligand>
        <name>a divalent metal cation</name>
        <dbReference type="ChEBI" id="CHEBI:60240"/>
    </ligand>
</feature>
<feature type="modified residue" description="N6-acetyllysine" evidence="4">
    <location>
        <position position="74"/>
    </location>
</feature>
<feature type="modified residue" description="N6-acetyllysine" evidence="4">
    <location>
        <position position="140"/>
    </location>
</feature>
<feature type="modified residue" description="N6-acetyllysine" evidence="4">
    <location>
        <position position="203"/>
    </location>
</feature>
<feature type="modified residue" description="N6-acetyllysine" evidence="4">
    <location>
        <position position="230"/>
    </location>
</feature>
<feature type="modified residue" description="N6-acetyllysine" evidence="4">
    <location>
        <position position="240"/>
    </location>
</feature>
<feature type="modified residue" description="N6-acetyllysine" evidence="4">
    <location>
        <position position="299"/>
    </location>
</feature>
<feature type="splice variant" id="VSP_028828" description="In isoform 3." evidence="6">
    <original>EKGQILSSAADIAATVQHTMACHLV</original>
    <variation>FLISKVEQINIPGLCLKIAAHFCRY</variation>
    <location>
        <begin position="274"/>
        <end position="298"/>
    </location>
</feature>
<feature type="splice variant" id="VSP_028829" description="In isoform 3." evidence="6">
    <location>
        <begin position="299"/>
        <end position="414"/>
    </location>
</feature>
<feature type="splice variant" id="VSP_028830" description="In isoform 2." evidence="5">
    <location>
        <begin position="365"/>
        <end position="414"/>
    </location>
</feature>
<feature type="sequence variant" id="VAR_036651" description="In dbSNP:rs3749014.">
    <original>A</original>
    <variation>P</variation>
    <location>
        <position position="229"/>
    </location>
</feature>
<feature type="mutagenesis site" description="Mimics acetylation; decreased formation of tRNA threonylcarbamoyladenosine modification." evidence="4">
    <original>K</original>
    <variation>Q</variation>
    <location>
        <position position="203"/>
    </location>
</feature>
<feature type="mutagenesis site" description="Mimics acetylation; increased formation of tRNA threonylcarbamoyladenosine modification." evidence="4">
    <original>K</original>
    <variation>Q</variation>
    <location>
        <position position="299"/>
    </location>
</feature>
<feature type="sequence conflict" description="In Ref. 1; CAC14666." evidence="7" ref="1">
    <original>G</original>
    <variation>E</variation>
    <location>
        <position position="31"/>
    </location>
</feature>
<feature type="sequence conflict" description="In Ref. 2; BAB70923." evidence="7" ref="2">
    <original>S</original>
    <variation>P</variation>
    <location>
        <position position="209"/>
    </location>
</feature>
<feature type="sequence conflict" description="In Ref. 2; BAB70923." evidence="7" ref="2">
    <original>S</original>
    <variation>P</variation>
    <location>
        <position position="252"/>
    </location>
</feature>
<feature type="sequence conflict" description="In Ref. 2; BAB70923." evidence="7" ref="2">
    <original>Y</original>
    <variation>C</variation>
    <location>
        <position position="332"/>
    </location>
</feature>
<reference key="1">
    <citation type="submission" date="2000-10" db="EMBL/GenBank/DDBJ databases">
        <title>Cloning and sequencing of a second human putative sialoglycoprotease homologue.</title>
        <authorList>
            <person name="Chen J.M."/>
            <person name="Fortunato M."/>
            <person name="Barrett A.J."/>
        </authorList>
    </citation>
    <scope>NUCLEOTIDE SEQUENCE [MRNA] (ISOFORM 3)</scope>
    <source>
        <tissue>Uterus</tissue>
    </source>
</reference>
<reference key="2">
    <citation type="journal article" date="2004" name="Nat. Genet.">
        <title>Complete sequencing and characterization of 21,243 full-length human cDNAs.</title>
        <authorList>
            <person name="Ota T."/>
            <person name="Suzuki Y."/>
            <person name="Nishikawa T."/>
            <person name="Otsuki T."/>
            <person name="Sugiyama T."/>
            <person name="Irie R."/>
            <person name="Wakamatsu A."/>
            <person name="Hayashi K."/>
            <person name="Sato H."/>
            <person name="Nagai K."/>
            <person name="Kimura K."/>
            <person name="Makita H."/>
            <person name="Sekine M."/>
            <person name="Obayashi M."/>
            <person name="Nishi T."/>
            <person name="Shibahara T."/>
            <person name="Tanaka T."/>
            <person name="Ishii S."/>
            <person name="Yamamoto J."/>
            <person name="Saito K."/>
            <person name="Kawai Y."/>
            <person name="Isono Y."/>
            <person name="Nakamura Y."/>
            <person name="Nagahari K."/>
            <person name="Murakami K."/>
            <person name="Yasuda T."/>
            <person name="Iwayanagi T."/>
            <person name="Wagatsuma M."/>
            <person name="Shiratori A."/>
            <person name="Sudo H."/>
            <person name="Hosoiri T."/>
            <person name="Kaku Y."/>
            <person name="Kodaira H."/>
            <person name="Kondo H."/>
            <person name="Sugawara M."/>
            <person name="Takahashi M."/>
            <person name="Kanda K."/>
            <person name="Yokoi T."/>
            <person name="Furuya T."/>
            <person name="Kikkawa E."/>
            <person name="Omura Y."/>
            <person name="Abe K."/>
            <person name="Kamihara K."/>
            <person name="Katsuta N."/>
            <person name="Sato K."/>
            <person name="Tanikawa M."/>
            <person name="Yamazaki M."/>
            <person name="Ninomiya K."/>
            <person name="Ishibashi T."/>
            <person name="Yamashita H."/>
            <person name="Murakawa K."/>
            <person name="Fujimori K."/>
            <person name="Tanai H."/>
            <person name="Kimata M."/>
            <person name="Watanabe M."/>
            <person name="Hiraoka S."/>
            <person name="Chiba Y."/>
            <person name="Ishida S."/>
            <person name="Ono Y."/>
            <person name="Takiguchi S."/>
            <person name="Watanabe S."/>
            <person name="Yosida M."/>
            <person name="Hotuta T."/>
            <person name="Kusano J."/>
            <person name="Kanehori K."/>
            <person name="Takahashi-Fujii A."/>
            <person name="Hara H."/>
            <person name="Tanase T.-O."/>
            <person name="Nomura Y."/>
            <person name="Togiya S."/>
            <person name="Komai F."/>
            <person name="Hara R."/>
            <person name="Takeuchi K."/>
            <person name="Arita M."/>
            <person name="Imose N."/>
            <person name="Musashino K."/>
            <person name="Yuuki H."/>
            <person name="Oshima A."/>
            <person name="Sasaki N."/>
            <person name="Aotsuka S."/>
            <person name="Yoshikawa Y."/>
            <person name="Matsunawa H."/>
            <person name="Ichihara T."/>
            <person name="Shiohata N."/>
            <person name="Sano S."/>
            <person name="Moriya S."/>
            <person name="Momiyama H."/>
            <person name="Satoh N."/>
            <person name="Takami S."/>
            <person name="Terashima Y."/>
            <person name="Suzuki O."/>
            <person name="Nakagawa S."/>
            <person name="Senoh A."/>
            <person name="Mizoguchi H."/>
            <person name="Goto Y."/>
            <person name="Shimizu F."/>
            <person name="Wakebe H."/>
            <person name="Hishigaki H."/>
            <person name="Watanabe T."/>
            <person name="Sugiyama A."/>
            <person name="Takemoto M."/>
            <person name="Kawakami B."/>
            <person name="Yamazaki M."/>
            <person name="Watanabe K."/>
            <person name="Kumagai A."/>
            <person name="Itakura S."/>
            <person name="Fukuzumi Y."/>
            <person name="Fujimori Y."/>
            <person name="Komiyama M."/>
            <person name="Tashiro H."/>
            <person name="Tanigami A."/>
            <person name="Fujiwara T."/>
            <person name="Ono T."/>
            <person name="Yamada K."/>
            <person name="Fujii Y."/>
            <person name="Ozaki K."/>
            <person name="Hirao M."/>
            <person name="Ohmori Y."/>
            <person name="Kawabata A."/>
            <person name="Hikiji T."/>
            <person name="Kobatake N."/>
            <person name="Inagaki H."/>
            <person name="Ikema Y."/>
            <person name="Okamoto S."/>
            <person name="Okitani R."/>
            <person name="Kawakami T."/>
            <person name="Noguchi S."/>
            <person name="Itoh T."/>
            <person name="Shigeta K."/>
            <person name="Senba T."/>
            <person name="Matsumura K."/>
            <person name="Nakajima Y."/>
            <person name="Mizuno T."/>
            <person name="Morinaga M."/>
            <person name="Sasaki M."/>
            <person name="Togashi T."/>
            <person name="Oyama M."/>
            <person name="Hata H."/>
            <person name="Watanabe M."/>
            <person name="Komatsu T."/>
            <person name="Mizushima-Sugano J."/>
            <person name="Satoh T."/>
            <person name="Shirai Y."/>
            <person name="Takahashi Y."/>
            <person name="Nakagawa K."/>
            <person name="Okumura K."/>
            <person name="Nagase T."/>
            <person name="Nomura N."/>
            <person name="Kikuchi H."/>
            <person name="Masuho Y."/>
            <person name="Yamashita R."/>
            <person name="Nakai K."/>
            <person name="Yada T."/>
            <person name="Nakamura Y."/>
            <person name="Ohara O."/>
            <person name="Isogai T."/>
            <person name="Sugano S."/>
        </authorList>
    </citation>
    <scope>NUCLEOTIDE SEQUENCE [LARGE SCALE MRNA] (ISOFORM 2)</scope>
    <source>
        <tissue>Brain</tissue>
    </source>
</reference>
<reference key="3">
    <citation type="journal article" date="2005" name="Nature">
        <title>Generation and annotation of the DNA sequences of human chromosomes 2 and 4.</title>
        <authorList>
            <person name="Hillier L.W."/>
            <person name="Graves T.A."/>
            <person name="Fulton R.S."/>
            <person name="Fulton L.A."/>
            <person name="Pepin K.H."/>
            <person name="Minx P."/>
            <person name="Wagner-McPherson C."/>
            <person name="Layman D."/>
            <person name="Wylie K."/>
            <person name="Sekhon M."/>
            <person name="Becker M.C."/>
            <person name="Fewell G.A."/>
            <person name="Delehaunty K.D."/>
            <person name="Miner T.L."/>
            <person name="Nash W.E."/>
            <person name="Kremitzki C."/>
            <person name="Oddy L."/>
            <person name="Du H."/>
            <person name="Sun H."/>
            <person name="Bradshaw-Cordum H."/>
            <person name="Ali J."/>
            <person name="Carter J."/>
            <person name="Cordes M."/>
            <person name="Harris A."/>
            <person name="Isak A."/>
            <person name="van Brunt A."/>
            <person name="Nguyen C."/>
            <person name="Du F."/>
            <person name="Courtney L."/>
            <person name="Kalicki J."/>
            <person name="Ozersky P."/>
            <person name="Abbott S."/>
            <person name="Armstrong J."/>
            <person name="Belter E.A."/>
            <person name="Caruso L."/>
            <person name="Cedroni M."/>
            <person name="Cotton M."/>
            <person name="Davidson T."/>
            <person name="Desai A."/>
            <person name="Elliott G."/>
            <person name="Erb T."/>
            <person name="Fronick C."/>
            <person name="Gaige T."/>
            <person name="Haakenson W."/>
            <person name="Haglund K."/>
            <person name="Holmes A."/>
            <person name="Harkins R."/>
            <person name="Kim K."/>
            <person name="Kruchowski S.S."/>
            <person name="Strong C.M."/>
            <person name="Grewal N."/>
            <person name="Goyea E."/>
            <person name="Hou S."/>
            <person name="Levy A."/>
            <person name="Martinka S."/>
            <person name="Mead K."/>
            <person name="McLellan M.D."/>
            <person name="Meyer R."/>
            <person name="Randall-Maher J."/>
            <person name="Tomlinson C."/>
            <person name="Dauphin-Kohlberg S."/>
            <person name="Kozlowicz-Reilly A."/>
            <person name="Shah N."/>
            <person name="Swearengen-Shahid S."/>
            <person name="Snider J."/>
            <person name="Strong J.T."/>
            <person name="Thompson J."/>
            <person name="Yoakum M."/>
            <person name="Leonard S."/>
            <person name="Pearman C."/>
            <person name="Trani L."/>
            <person name="Radionenko M."/>
            <person name="Waligorski J.E."/>
            <person name="Wang C."/>
            <person name="Rock S.M."/>
            <person name="Tin-Wollam A.-M."/>
            <person name="Maupin R."/>
            <person name="Latreille P."/>
            <person name="Wendl M.C."/>
            <person name="Yang S.-P."/>
            <person name="Pohl C."/>
            <person name="Wallis J.W."/>
            <person name="Spieth J."/>
            <person name="Bieri T.A."/>
            <person name="Berkowicz N."/>
            <person name="Nelson J.O."/>
            <person name="Osborne J."/>
            <person name="Ding L."/>
            <person name="Meyer R."/>
            <person name="Sabo A."/>
            <person name="Shotland Y."/>
            <person name="Sinha P."/>
            <person name="Wohldmann P.E."/>
            <person name="Cook L.L."/>
            <person name="Hickenbotham M.T."/>
            <person name="Eldred J."/>
            <person name="Williams D."/>
            <person name="Jones T.A."/>
            <person name="She X."/>
            <person name="Ciccarelli F.D."/>
            <person name="Izaurralde E."/>
            <person name="Taylor J."/>
            <person name="Schmutz J."/>
            <person name="Myers R.M."/>
            <person name="Cox D.R."/>
            <person name="Huang X."/>
            <person name="McPherson J.D."/>
            <person name="Mardis E.R."/>
            <person name="Clifton S.W."/>
            <person name="Warren W.C."/>
            <person name="Chinwalla A.T."/>
            <person name="Eddy S.R."/>
            <person name="Marra M.A."/>
            <person name="Ovcharenko I."/>
            <person name="Furey T.S."/>
            <person name="Miller W."/>
            <person name="Eichler E.E."/>
            <person name="Bork P."/>
            <person name="Suyama M."/>
            <person name="Torrents D."/>
            <person name="Waterston R.H."/>
            <person name="Wilson R.K."/>
        </authorList>
    </citation>
    <scope>NUCLEOTIDE SEQUENCE [LARGE SCALE GENOMIC DNA]</scope>
</reference>
<reference key="4">
    <citation type="journal article" date="2004" name="Genome Res.">
        <title>The status, quality, and expansion of the NIH full-length cDNA project: the Mammalian Gene Collection (MGC).</title>
        <authorList>
            <consortium name="The MGC Project Team"/>
        </authorList>
    </citation>
    <scope>NUCLEOTIDE SEQUENCE [LARGE SCALE MRNA] (ISOFORM 1)</scope>
    <source>
        <tissue>Muscle</tissue>
    </source>
</reference>
<reference key="5">
    <citation type="journal article" date="2009" name="Biochem. J.">
        <title>Eukaryotic GCP1 is a conserved mitochondrial protein required for progression of embryo development beyond the globular stage in Arabidopsis thaliana.</title>
        <authorList>
            <person name="Haussuehl K."/>
            <person name="Huesgen P.F."/>
            <person name="Meier M."/>
            <person name="Dessi P."/>
            <person name="Glaser E."/>
            <person name="Adamski J."/>
            <person name="Adamska I."/>
        </authorList>
    </citation>
    <scope>SUBCELLULAR LOCATION</scope>
    <scope>TISSUE SPECIFICITY</scope>
</reference>
<reference key="6">
    <citation type="journal article" date="2018" name="Nat. Commun.">
        <title>CO2-sensitive tRNA modification associated with human mitochondrial disease.</title>
        <authorList>
            <person name="Lin H."/>
            <person name="Miyauchi K."/>
            <person name="Harada T."/>
            <person name="Okita R."/>
            <person name="Takeshita E."/>
            <person name="Komaki H."/>
            <person name="Fujioka K."/>
            <person name="Yagasaki H."/>
            <person name="Goto Y.I."/>
            <person name="Yanaka K."/>
            <person name="Nakagawa S."/>
            <person name="Sakaguchi Y."/>
            <person name="Suzuki T."/>
        </authorList>
    </citation>
    <scope>FUNCTION</scope>
    <scope>CATALYTIC ACTIVITY</scope>
    <scope>SUBCELLULAR LOCATION</scope>
</reference>
<reference key="7">
    <citation type="journal article" date="2020" name="Nucleic Acids Res.">
        <title>Molecular basis for t6A modification in human mitochondria.</title>
        <authorList>
            <person name="Zhou J.B."/>
            <person name="Wang Y."/>
            <person name="Zeng Q.Y."/>
            <person name="Meng S.X."/>
            <person name="Wang E.D."/>
            <person name="Zhou X.L."/>
        </authorList>
    </citation>
    <scope>FUNCTION</scope>
    <scope>CATALYTIC ACTIVITY</scope>
    <scope>SUBUNIT</scope>
    <scope>ACETYLATION AT LYS-74; LYS-140; LYS-203; LYS-230; LYS-240 AND LYS-299</scope>
    <scope>MUTAGENESIS OF LYS-203 AND LYS-299</scope>
</reference>
<sequence>MLILTKTAGVFFKPSKRKVYEFLRSFNFHPGTLFLHKIVLGIETSCDDTAAAVVDETGNVLGEAIHSQTEVHLKTGGIVPPAAQQLHRENIQRIVQEALSASGVSPSDLSAIATTIKPGLALSLGVGLSFSLQLVGQLKKPFIPIHHMEAHALTIRLTNKVEFPFLVLLISGGHCLLALVQGVSDFLLLGKSLDIAPGDMLDKVARRLSLIKHPECSTMSGGKAIEHLAKQGNRFHFDIKPPLHHAKNCDFSFTGLQHVTDKIIMKKEKEEGIEKGQILSSAADIAATVQHTMACHLVKRTHRAILFCKQRDLLPQNNAVLVASGGVASNFYIRRALEILTNATQCTLLCPPPRLCTDNGIMIAWNGIERLRAGLGILHDIEGIRYEPKCPLGVDISKEVGEASIKVPQLKMEI</sequence>
<keyword id="KW-0007">Acetylation</keyword>
<keyword id="KW-0012">Acyltransferase</keyword>
<keyword id="KW-0025">Alternative splicing</keyword>
<keyword id="KW-0479">Metal-binding</keyword>
<keyword id="KW-0496">Mitochondrion</keyword>
<keyword id="KW-1267">Proteomics identification</keyword>
<keyword id="KW-1185">Reference proteome</keyword>
<keyword id="KW-0808">Transferase</keyword>
<keyword id="KW-0809">Transit peptide</keyword>
<keyword id="KW-0819">tRNA processing</keyword>
<gene>
    <name evidence="1" type="primary">OSGEPL1</name>
    <name type="synonym">GCP1</name>
</gene>
<proteinExistence type="evidence at protein level"/>
<name>OSGL1_HUMAN</name>
<protein>
    <recommendedName>
        <fullName evidence="1">tRNA N6-adenosine threonylcarbamoyltransferase, mitochondrial</fullName>
        <ecNumber evidence="1 8 9">2.3.1.234</ecNumber>
    </recommendedName>
    <alternativeName>
        <fullName evidence="1">N6-L-threonylcarbamoyladenine synthase</fullName>
        <shortName evidence="1">t(6)A synthase</shortName>
    </alternativeName>
    <alternativeName>
        <fullName evidence="1">O-sialoglycoprotein endopeptidase-like protein 1</fullName>
        <shortName>OSGEP-like protein 1</shortName>
    </alternativeName>
    <alternativeName>
        <fullName evidence="1">t(6)A37 threonylcarbamoyladenosine biosynthesis protein OSGEPL1</fullName>
    </alternativeName>
    <alternativeName>
        <fullName evidence="1">tRNA threonylcarbamoyladenosine biosynthesis protein OSGEPL1</fullName>
    </alternativeName>
</protein>
<accession>Q9H4B0</accession>
<accession>Q96EV9</accession>
<accession>Q96NH5</accession>
<evidence type="ECO:0000255" key="1">
    <source>
        <dbReference type="HAMAP-Rule" id="MF_03179"/>
    </source>
</evidence>
<evidence type="ECO:0000269" key="2">
    <source>
    </source>
</evidence>
<evidence type="ECO:0000269" key="3">
    <source>
    </source>
</evidence>
<evidence type="ECO:0000269" key="4">
    <source>
    </source>
</evidence>
<evidence type="ECO:0000303" key="5">
    <source>
    </source>
</evidence>
<evidence type="ECO:0000303" key="6">
    <source ref="1"/>
</evidence>
<evidence type="ECO:0000305" key="7"/>
<evidence type="ECO:0000305" key="8">
    <source>
    </source>
</evidence>
<evidence type="ECO:0000305" key="9">
    <source>
    </source>
</evidence>